<evidence type="ECO:0000255" key="1">
    <source>
        <dbReference type="HAMAP-Rule" id="MF_00195"/>
    </source>
</evidence>
<organism>
    <name type="scientific">Methylibium petroleiphilum (strain ATCC BAA-1232 / LMG 22953 / PM1)</name>
    <dbReference type="NCBI Taxonomy" id="420662"/>
    <lineage>
        <taxon>Bacteria</taxon>
        <taxon>Pseudomonadati</taxon>
        <taxon>Pseudomonadota</taxon>
        <taxon>Betaproteobacteria</taxon>
        <taxon>Burkholderiales</taxon>
        <taxon>Sphaerotilaceae</taxon>
        <taxon>Methylibium</taxon>
    </lineage>
</organism>
<reference key="1">
    <citation type="journal article" date="2007" name="J. Bacteriol.">
        <title>Whole-genome analysis of the methyl tert-butyl ether-degrading beta-proteobacterium Methylibium petroleiphilum PM1.</title>
        <authorList>
            <person name="Kane S.R."/>
            <person name="Chakicherla A.Y."/>
            <person name="Chain P.S.G."/>
            <person name="Schmidt R."/>
            <person name="Shin M.W."/>
            <person name="Legler T.C."/>
            <person name="Scow K.M."/>
            <person name="Larimer F.W."/>
            <person name="Lucas S.M."/>
            <person name="Richardson P.M."/>
            <person name="Hristova K.R."/>
        </authorList>
    </citation>
    <scope>NUCLEOTIDE SEQUENCE [LARGE SCALE GENOMIC DNA]</scope>
    <source>
        <strain>ATCC BAA-1232 / LMG 22953 / PM1</strain>
    </source>
</reference>
<proteinExistence type="inferred from homology"/>
<protein>
    <recommendedName>
        <fullName evidence="1">GTPase Der</fullName>
    </recommendedName>
    <alternativeName>
        <fullName evidence="1">GTP-binding protein EngA</fullName>
    </alternativeName>
</protein>
<sequence length="446" mass="49065">MKPVLALVGRPNVGKSTLFNRLTKSRDAIVADFAGLTRDRHYGDGRLGEREFIVVDTGGFEPTAESGIYKEMAKQTRQAVAESDVVIFVVDVRAGVTGQDHDIARYLRTAGKKVLLAANKAEGMLEGIQLAEFYELGMGEPLAVSSAHGQGIRSLLTAALEDFAFDEPDDLALDDPERPIRLAVAGRPNVGKSTLINTWLGEERLVAFDLPGTTRDAISVPFERNGQKFELIDTAGLRRKGKVFESIEKFSVVKTLQAIADANVVLLLLDATQGVTDQDAHIAGYILDSGRAVVLAVNKWDAVDSYQRELLQRSIEQRLAFLKFAPVLHISAIKRQGLGPVWKAIADAWASATKKLATPVLTRVLLEAVQFQQPKRAGAFRPKLRYAHQGGQNPPVIVIHGNSLEHVTDAYKRFLEGRFRCHFQLSGTPMRIEMKSSRNPFAEKDS</sequence>
<feature type="chain" id="PRO_1000011665" description="GTPase Der">
    <location>
        <begin position="1"/>
        <end position="446"/>
    </location>
</feature>
<feature type="domain" description="EngA-type G 1">
    <location>
        <begin position="3"/>
        <end position="167"/>
    </location>
</feature>
<feature type="domain" description="EngA-type G 2">
    <location>
        <begin position="180"/>
        <end position="353"/>
    </location>
</feature>
<feature type="domain" description="KH-like" evidence="1">
    <location>
        <begin position="354"/>
        <end position="438"/>
    </location>
</feature>
<feature type="binding site" evidence="1">
    <location>
        <begin position="9"/>
        <end position="16"/>
    </location>
    <ligand>
        <name>GTP</name>
        <dbReference type="ChEBI" id="CHEBI:37565"/>
        <label>1</label>
    </ligand>
</feature>
<feature type="binding site" evidence="1">
    <location>
        <begin position="56"/>
        <end position="60"/>
    </location>
    <ligand>
        <name>GTP</name>
        <dbReference type="ChEBI" id="CHEBI:37565"/>
        <label>1</label>
    </ligand>
</feature>
<feature type="binding site" evidence="1">
    <location>
        <begin position="119"/>
        <end position="122"/>
    </location>
    <ligand>
        <name>GTP</name>
        <dbReference type="ChEBI" id="CHEBI:37565"/>
        <label>1</label>
    </ligand>
</feature>
<feature type="binding site" evidence="1">
    <location>
        <begin position="186"/>
        <end position="193"/>
    </location>
    <ligand>
        <name>GTP</name>
        <dbReference type="ChEBI" id="CHEBI:37565"/>
        <label>2</label>
    </ligand>
</feature>
<feature type="binding site" evidence="1">
    <location>
        <begin position="233"/>
        <end position="237"/>
    </location>
    <ligand>
        <name>GTP</name>
        <dbReference type="ChEBI" id="CHEBI:37565"/>
        <label>2</label>
    </ligand>
</feature>
<feature type="binding site" evidence="1">
    <location>
        <begin position="298"/>
        <end position="301"/>
    </location>
    <ligand>
        <name>GTP</name>
        <dbReference type="ChEBI" id="CHEBI:37565"/>
        <label>2</label>
    </ligand>
</feature>
<gene>
    <name evidence="1" type="primary">der</name>
    <name type="synonym">engA</name>
    <name type="ordered locus">Mpe_A1992</name>
</gene>
<name>DER_METPP</name>
<comment type="function">
    <text evidence="1">GTPase that plays an essential role in the late steps of ribosome biogenesis.</text>
</comment>
<comment type="subunit">
    <text evidence="1">Associates with the 50S ribosomal subunit.</text>
</comment>
<comment type="similarity">
    <text evidence="1">Belongs to the TRAFAC class TrmE-Era-EngA-EngB-Septin-like GTPase superfamily. EngA (Der) GTPase family.</text>
</comment>
<keyword id="KW-0342">GTP-binding</keyword>
<keyword id="KW-0547">Nucleotide-binding</keyword>
<keyword id="KW-1185">Reference proteome</keyword>
<keyword id="KW-0677">Repeat</keyword>
<keyword id="KW-0690">Ribosome biogenesis</keyword>
<dbReference type="EMBL" id="CP000555">
    <property type="protein sequence ID" value="ABM94950.1"/>
    <property type="molecule type" value="Genomic_DNA"/>
</dbReference>
<dbReference type="RefSeq" id="WP_011829587.1">
    <property type="nucleotide sequence ID" value="NC_008825.1"/>
</dbReference>
<dbReference type="SMR" id="A2SHB1"/>
<dbReference type="STRING" id="420662.Mpe_A1992"/>
<dbReference type="KEGG" id="mpt:Mpe_A1992"/>
<dbReference type="eggNOG" id="COG1160">
    <property type="taxonomic scope" value="Bacteria"/>
</dbReference>
<dbReference type="HOGENOM" id="CLU_016077_6_2_4"/>
<dbReference type="Proteomes" id="UP000000366">
    <property type="component" value="Chromosome"/>
</dbReference>
<dbReference type="GO" id="GO:0005525">
    <property type="term" value="F:GTP binding"/>
    <property type="evidence" value="ECO:0007669"/>
    <property type="project" value="UniProtKB-UniRule"/>
</dbReference>
<dbReference type="GO" id="GO:0043022">
    <property type="term" value="F:ribosome binding"/>
    <property type="evidence" value="ECO:0007669"/>
    <property type="project" value="TreeGrafter"/>
</dbReference>
<dbReference type="GO" id="GO:0042254">
    <property type="term" value="P:ribosome biogenesis"/>
    <property type="evidence" value="ECO:0007669"/>
    <property type="project" value="UniProtKB-KW"/>
</dbReference>
<dbReference type="CDD" id="cd01894">
    <property type="entry name" value="EngA1"/>
    <property type="match status" value="1"/>
</dbReference>
<dbReference type="CDD" id="cd01895">
    <property type="entry name" value="EngA2"/>
    <property type="match status" value="1"/>
</dbReference>
<dbReference type="FunFam" id="3.30.300.20:FF:000004">
    <property type="entry name" value="GTPase Der"/>
    <property type="match status" value="1"/>
</dbReference>
<dbReference type="FunFam" id="3.40.50.300:FF:000040">
    <property type="entry name" value="GTPase Der"/>
    <property type="match status" value="1"/>
</dbReference>
<dbReference type="FunFam" id="3.40.50.300:FF:000057">
    <property type="entry name" value="GTPase Der"/>
    <property type="match status" value="1"/>
</dbReference>
<dbReference type="Gene3D" id="3.30.300.20">
    <property type="match status" value="1"/>
</dbReference>
<dbReference type="Gene3D" id="3.40.50.300">
    <property type="entry name" value="P-loop containing nucleotide triphosphate hydrolases"/>
    <property type="match status" value="2"/>
</dbReference>
<dbReference type="HAMAP" id="MF_00195">
    <property type="entry name" value="GTPase_Der"/>
    <property type="match status" value="1"/>
</dbReference>
<dbReference type="InterPro" id="IPR031166">
    <property type="entry name" value="G_ENGA"/>
</dbReference>
<dbReference type="InterPro" id="IPR006073">
    <property type="entry name" value="GTP-bd"/>
</dbReference>
<dbReference type="InterPro" id="IPR016484">
    <property type="entry name" value="GTPase_Der"/>
</dbReference>
<dbReference type="InterPro" id="IPR032859">
    <property type="entry name" value="KH_dom-like"/>
</dbReference>
<dbReference type="InterPro" id="IPR015946">
    <property type="entry name" value="KH_dom-like_a/b"/>
</dbReference>
<dbReference type="InterPro" id="IPR027417">
    <property type="entry name" value="P-loop_NTPase"/>
</dbReference>
<dbReference type="InterPro" id="IPR005225">
    <property type="entry name" value="Small_GTP-bd"/>
</dbReference>
<dbReference type="NCBIfam" id="TIGR03594">
    <property type="entry name" value="GTPase_EngA"/>
    <property type="match status" value="1"/>
</dbReference>
<dbReference type="NCBIfam" id="TIGR00231">
    <property type="entry name" value="small_GTP"/>
    <property type="match status" value="2"/>
</dbReference>
<dbReference type="PANTHER" id="PTHR43834">
    <property type="entry name" value="GTPASE DER"/>
    <property type="match status" value="1"/>
</dbReference>
<dbReference type="PANTHER" id="PTHR43834:SF6">
    <property type="entry name" value="GTPASE DER"/>
    <property type="match status" value="1"/>
</dbReference>
<dbReference type="Pfam" id="PF14714">
    <property type="entry name" value="KH_dom-like"/>
    <property type="match status" value="1"/>
</dbReference>
<dbReference type="Pfam" id="PF01926">
    <property type="entry name" value="MMR_HSR1"/>
    <property type="match status" value="2"/>
</dbReference>
<dbReference type="PIRSF" id="PIRSF006485">
    <property type="entry name" value="GTP-binding_EngA"/>
    <property type="match status" value="1"/>
</dbReference>
<dbReference type="PRINTS" id="PR00326">
    <property type="entry name" value="GTP1OBG"/>
</dbReference>
<dbReference type="SUPFAM" id="SSF52540">
    <property type="entry name" value="P-loop containing nucleoside triphosphate hydrolases"/>
    <property type="match status" value="2"/>
</dbReference>
<dbReference type="PROSITE" id="PS51712">
    <property type="entry name" value="G_ENGA"/>
    <property type="match status" value="2"/>
</dbReference>
<accession>A2SHB1</accession>